<organism>
    <name type="scientific">Escherichia coli (strain K12 / MC4100 / BW2952)</name>
    <dbReference type="NCBI Taxonomy" id="595496"/>
    <lineage>
        <taxon>Bacteria</taxon>
        <taxon>Pseudomonadati</taxon>
        <taxon>Pseudomonadota</taxon>
        <taxon>Gammaproteobacteria</taxon>
        <taxon>Enterobacterales</taxon>
        <taxon>Enterobacteriaceae</taxon>
        <taxon>Escherichia</taxon>
    </lineage>
</organism>
<proteinExistence type="inferred from homology"/>
<keyword id="KW-0066">ATP synthesis</keyword>
<keyword id="KW-0067">ATP-binding</keyword>
<keyword id="KW-0997">Cell inner membrane</keyword>
<keyword id="KW-1003">Cell membrane</keyword>
<keyword id="KW-0139">CF(1)</keyword>
<keyword id="KW-0375">Hydrogen ion transport</keyword>
<keyword id="KW-0406">Ion transport</keyword>
<keyword id="KW-0472">Membrane</keyword>
<keyword id="KW-0547">Nucleotide-binding</keyword>
<keyword id="KW-1278">Translocase</keyword>
<keyword id="KW-0813">Transport</keyword>
<dbReference type="EC" id="7.1.2.2" evidence="1"/>
<dbReference type="EMBL" id="CP001396">
    <property type="protein sequence ID" value="ACR63065.1"/>
    <property type="molecule type" value="Genomic_DNA"/>
</dbReference>
<dbReference type="RefSeq" id="WP_001176745.1">
    <property type="nucleotide sequence ID" value="NC_012759.1"/>
</dbReference>
<dbReference type="SMR" id="C4ZZ12"/>
<dbReference type="GeneID" id="93778233"/>
<dbReference type="KEGG" id="ebw:BWG_3425"/>
<dbReference type="HOGENOM" id="CLU_010091_2_1_6"/>
<dbReference type="GO" id="GO:0005886">
    <property type="term" value="C:plasma membrane"/>
    <property type="evidence" value="ECO:0007669"/>
    <property type="project" value="UniProtKB-SubCell"/>
</dbReference>
<dbReference type="GO" id="GO:0045259">
    <property type="term" value="C:proton-transporting ATP synthase complex"/>
    <property type="evidence" value="ECO:0007669"/>
    <property type="project" value="UniProtKB-KW"/>
</dbReference>
<dbReference type="GO" id="GO:0043531">
    <property type="term" value="F:ADP binding"/>
    <property type="evidence" value="ECO:0007669"/>
    <property type="project" value="TreeGrafter"/>
</dbReference>
<dbReference type="GO" id="GO:0005524">
    <property type="term" value="F:ATP binding"/>
    <property type="evidence" value="ECO:0007669"/>
    <property type="project" value="UniProtKB-UniRule"/>
</dbReference>
<dbReference type="GO" id="GO:0046933">
    <property type="term" value="F:proton-transporting ATP synthase activity, rotational mechanism"/>
    <property type="evidence" value="ECO:0007669"/>
    <property type="project" value="UniProtKB-UniRule"/>
</dbReference>
<dbReference type="CDD" id="cd18113">
    <property type="entry name" value="ATP-synt_F1_alpha_C"/>
    <property type="match status" value="1"/>
</dbReference>
<dbReference type="CDD" id="cd18116">
    <property type="entry name" value="ATP-synt_F1_alpha_N"/>
    <property type="match status" value="1"/>
</dbReference>
<dbReference type="CDD" id="cd01132">
    <property type="entry name" value="F1-ATPase_alpha_CD"/>
    <property type="match status" value="1"/>
</dbReference>
<dbReference type="FunFam" id="1.20.150.20:FF:000001">
    <property type="entry name" value="ATP synthase subunit alpha"/>
    <property type="match status" value="1"/>
</dbReference>
<dbReference type="FunFam" id="2.40.30.20:FF:000001">
    <property type="entry name" value="ATP synthase subunit alpha"/>
    <property type="match status" value="1"/>
</dbReference>
<dbReference type="FunFam" id="3.40.50.300:FF:000002">
    <property type="entry name" value="ATP synthase subunit alpha"/>
    <property type="match status" value="1"/>
</dbReference>
<dbReference type="Gene3D" id="2.40.30.20">
    <property type="match status" value="1"/>
</dbReference>
<dbReference type="Gene3D" id="1.20.150.20">
    <property type="entry name" value="ATP synthase alpha/beta chain, C-terminal domain"/>
    <property type="match status" value="1"/>
</dbReference>
<dbReference type="Gene3D" id="3.40.50.300">
    <property type="entry name" value="P-loop containing nucleotide triphosphate hydrolases"/>
    <property type="match status" value="1"/>
</dbReference>
<dbReference type="HAMAP" id="MF_01346">
    <property type="entry name" value="ATP_synth_alpha_bact"/>
    <property type="match status" value="1"/>
</dbReference>
<dbReference type="InterPro" id="IPR023366">
    <property type="entry name" value="ATP_synth_asu-like_sf"/>
</dbReference>
<dbReference type="InterPro" id="IPR000793">
    <property type="entry name" value="ATP_synth_asu_C"/>
</dbReference>
<dbReference type="InterPro" id="IPR038376">
    <property type="entry name" value="ATP_synth_asu_C_sf"/>
</dbReference>
<dbReference type="InterPro" id="IPR033732">
    <property type="entry name" value="ATP_synth_F1_a_nt-bd_dom"/>
</dbReference>
<dbReference type="InterPro" id="IPR005294">
    <property type="entry name" value="ATP_synth_F1_asu"/>
</dbReference>
<dbReference type="InterPro" id="IPR020003">
    <property type="entry name" value="ATPase_a/bsu_AS"/>
</dbReference>
<dbReference type="InterPro" id="IPR004100">
    <property type="entry name" value="ATPase_F1/V1/A1_a/bsu_N"/>
</dbReference>
<dbReference type="InterPro" id="IPR036121">
    <property type="entry name" value="ATPase_F1/V1/A1_a/bsu_N_sf"/>
</dbReference>
<dbReference type="InterPro" id="IPR000194">
    <property type="entry name" value="ATPase_F1/V1/A1_a/bsu_nucl-bd"/>
</dbReference>
<dbReference type="InterPro" id="IPR027417">
    <property type="entry name" value="P-loop_NTPase"/>
</dbReference>
<dbReference type="NCBIfam" id="TIGR00962">
    <property type="entry name" value="atpA"/>
    <property type="match status" value="1"/>
</dbReference>
<dbReference type="NCBIfam" id="NF009884">
    <property type="entry name" value="PRK13343.1"/>
    <property type="match status" value="1"/>
</dbReference>
<dbReference type="PANTHER" id="PTHR48082">
    <property type="entry name" value="ATP SYNTHASE SUBUNIT ALPHA, MITOCHONDRIAL"/>
    <property type="match status" value="1"/>
</dbReference>
<dbReference type="PANTHER" id="PTHR48082:SF2">
    <property type="entry name" value="ATP SYNTHASE SUBUNIT ALPHA, MITOCHONDRIAL"/>
    <property type="match status" value="1"/>
</dbReference>
<dbReference type="Pfam" id="PF00006">
    <property type="entry name" value="ATP-synt_ab"/>
    <property type="match status" value="1"/>
</dbReference>
<dbReference type="Pfam" id="PF00306">
    <property type="entry name" value="ATP-synt_ab_C"/>
    <property type="match status" value="1"/>
</dbReference>
<dbReference type="Pfam" id="PF02874">
    <property type="entry name" value="ATP-synt_ab_N"/>
    <property type="match status" value="1"/>
</dbReference>
<dbReference type="SUPFAM" id="SSF47917">
    <property type="entry name" value="C-terminal domain of alpha and beta subunits of F1 ATP synthase"/>
    <property type="match status" value="1"/>
</dbReference>
<dbReference type="SUPFAM" id="SSF50615">
    <property type="entry name" value="N-terminal domain of alpha and beta subunits of F1 ATP synthase"/>
    <property type="match status" value="1"/>
</dbReference>
<dbReference type="SUPFAM" id="SSF52540">
    <property type="entry name" value="P-loop containing nucleoside triphosphate hydrolases"/>
    <property type="match status" value="1"/>
</dbReference>
<dbReference type="PROSITE" id="PS00152">
    <property type="entry name" value="ATPASE_ALPHA_BETA"/>
    <property type="match status" value="1"/>
</dbReference>
<reference key="1">
    <citation type="journal article" date="2009" name="J. Bacteriol.">
        <title>Genomic sequencing reveals regulatory mutations and recombinational events in the widely used MC4100 lineage of Escherichia coli K-12.</title>
        <authorList>
            <person name="Ferenci T."/>
            <person name="Zhou Z."/>
            <person name="Betteridge T."/>
            <person name="Ren Y."/>
            <person name="Liu Y."/>
            <person name="Feng L."/>
            <person name="Reeves P.R."/>
            <person name="Wang L."/>
        </authorList>
    </citation>
    <scope>NUCLEOTIDE SEQUENCE [LARGE SCALE GENOMIC DNA]</scope>
    <source>
        <strain>K12 / MC4100 / BW2952</strain>
    </source>
</reference>
<evidence type="ECO:0000255" key="1">
    <source>
        <dbReference type="HAMAP-Rule" id="MF_01346"/>
    </source>
</evidence>
<gene>
    <name evidence="1" type="primary">atpA</name>
    <name type="ordered locus">BWG_3425</name>
</gene>
<name>ATPA_ECOBW</name>
<accession>C4ZZ12</accession>
<protein>
    <recommendedName>
        <fullName evidence="1">ATP synthase subunit alpha</fullName>
        <ecNumber evidence="1">7.1.2.2</ecNumber>
    </recommendedName>
    <alternativeName>
        <fullName evidence="1">ATP synthase F1 sector subunit alpha</fullName>
    </alternativeName>
    <alternativeName>
        <fullName evidence="1">F-ATPase subunit alpha</fullName>
    </alternativeName>
</protein>
<feature type="chain" id="PRO_1000214807" description="ATP synthase subunit alpha">
    <location>
        <begin position="1"/>
        <end position="513"/>
    </location>
</feature>
<feature type="binding site" evidence="1">
    <location>
        <begin position="169"/>
        <end position="176"/>
    </location>
    <ligand>
        <name>ATP</name>
        <dbReference type="ChEBI" id="CHEBI:30616"/>
    </ligand>
</feature>
<feature type="site" description="Required for activity" evidence="1">
    <location>
        <position position="373"/>
    </location>
</feature>
<comment type="function">
    <text evidence="1">Produces ATP from ADP in the presence of a proton gradient across the membrane. The alpha chain is a regulatory subunit.</text>
</comment>
<comment type="catalytic activity">
    <reaction evidence="1">
        <text>ATP + H2O + 4 H(+)(in) = ADP + phosphate + 5 H(+)(out)</text>
        <dbReference type="Rhea" id="RHEA:57720"/>
        <dbReference type="ChEBI" id="CHEBI:15377"/>
        <dbReference type="ChEBI" id="CHEBI:15378"/>
        <dbReference type="ChEBI" id="CHEBI:30616"/>
        <dbReference type="ChEBI" id="CHEBI:43474"/>
        <dbReference type="ChEBI" id="CHEBI:456216"/>
        <dbReference type="EC" id="7.1.2.2"/>
    </reaction>
</comment>
<comment type="subunit">
    <text evidence="1">F-type ATPases have 2 components, CF(1) - the catalytic core - and CF(0) - the membrane proton channel. CF(1) has five subunits: alpha(3), beta(3), gamma(1), delta(1), epsilon(1). CF(0) has three main subunits: a(1), b(2) and c(9-12). The alpha and beta chains form an alternating ring which encloses part of the gamma chain. CF(1) is attached to CF(0) by a central stalk formed by the gamma and epsilon chains, while a peripheral stalk is formed by the delta and b chains.</text>
</comment>
<comment type="subcellular location">
    <subcellularLocation>
        <location evidence="1">Cell inner membrane</location>
        <topology evidence="1">Peripheral membrane protein</topology>
    </subcellularLocation>
</comment>
<comment type="similarity">
    <text evidence="1">Belongs to the ATPase alpha/beta chains family.</text>
</comment>
<sequence>MQLNSTEISELIKQRIAQFNVVSEAHNEGTIVSVSDGVIRIHGLADCMQGEMISLPGNRYAIALNLERDSVGAVVMGPYADLAEGMKVKCTGRILEVPVGRGLLGRVVNTLGAPIDGKGPLDHDGFSAVEAIAPGVIERQSVDQPVQTGYKAVDSMIPIGRGQRELIIGDRQTGKTALAIDAIINQRDSGIKCIYVAIGQKASTISNVVRKLEEHGALANTIVVVATASESAALQYLAPYAGCAMGEYFRDRGEDALIIYDDLSKQAVAYRQISLLLRRPPGREAFPGDVFYLHSRLLERAARVNAEYVEAFTKGEVKGKTGSLTALPIIETQAGDVSAFVPTNVISITDGQIFLETNLFNAGIRPAVNPGISVSRVGGAAQTKIMKKLSGGIRTALAQYRELAAFSQFASDLDDATRKQLDHGQKVTELLKQKQYAPMSVAQQSLVLFAAERGYLADVELSKIGSFEAALLAYVDRDHAPLMQEINQTGGYNDEIEGKLKGILDSFKATQSW</sequence>